<sequence length="187" mass="20686">MNLQHHFLIAMPALQDPIFRRSVVYICEHNTNGAMGIIVNKPLENLKIEGILEKLKITPEPRDESIRLDKPVMLGGPLAEDRGFILHTPPSNFASSIRISDNTVMTTSRDVLETLGTDKQPSDVLVALGYASWEKGQLEQEILDNAWLTAPADLNILFKTPIADRWREAAKLIGVDILTMPGVAGHA</sequence>
<comment type="similarity">
    <text evidence="1">Belongs to the UPF0301 (AlgH) family.</text>
</comment>
<comment type="sequence caution" evidence="2">
    <conflict type="erroneous initiation">
        <sequence resource="EMBL-CDS" id="ABB63138"/>
    </conflict>
</comment>
<feature type="chain" id="PRO_0000258882" description="UPF0301 protein YqgE">
    <location>
        <begin position="1"/>
        <end position="187"/>
    </location>
</feature>
<proteinExistence type="inferred from homology"/>
<accession>Q32C17</accession>
<reference key="1">
    <citation type="journal article" date="2005" name="Nucleic Acids Res.">
        <title>Genome dynamics and diversity of Shigella species, the etiologic agents of bacillary dysentery.</title>
        <authorList>
            <person name="Yang F."/>
            <person name="Yang J."/>
            <person name="Zhang X."/>
            <person name="Chen L."/>
            <person name="Jiang Y."/>
            <person name="Yan Y."/>
            <person name="Tang X."/>
            <person name="Wang J."/>
            <person name="Xiong Z."/>
            <person name="Dong J."/>
            <person name="Xue Y."/>
            <person name="Zhu Y."/>
            <person name="Xu X."/>
            <person name="Sun L."/>
            <person name="Chen S."/>
            <person name="Nie H."/>
            <person name="Peng J."/>
            <person name="Xu J."/>
            <person name="Wang Y."/>
            <person name="Yuan Z."/>
            <person name="Wen Y."/>
            <person name="Yao Z."/>
            <person name="Shen Y."/>
            <person name="Qiang B."/>
            <person name="Hou Y."/>
            <person name="Yu J."/>
            <person name="Jin Q."/>
        </authorList>
    </citation>
    <scope>NUCLEOTIDE SEQUENCE [LARGE SCALE GENOMIC DNA]</scope>
    <source>
        <strain>Sd197</strain>
    </source>
</reference>
<evidence type="ECO:0000255" key="1">
    <source>
        <dbReference type="HAMAP-Rule" id="MF_00758"/>
    </source>
</evidence>
<evidence type="ECO:0000305" key="2"/>
<dbReference type="EMBL" id="CP000034">
    <property type="protein sequence ID" value="ABB63138.1"/>
    <property type="status" value="ALT_INIT"/>
    <property type="molecule type" value="Genomic_DNA"/>
</dbReference>
<dbReference type="RefSeq" id="WP_001053178.1">
    <property type="nucleotide sequence ID" value="NC_007606.1"/>
</dbReference>
<dbReference type="RefSeq" id="YP_404629.2">
    <property type="nucleotide sequence ID" value="NC_007606.1"/>
</dbReference>
<dbReference type="SMR" id="Q32C17"/>
<dbReference type="STRING" id="300267.SDY_3124"/>
<dbReference type="EnsemblBacteria" id="ABB63138">
    <property type="protein sequence ID" value="ABB63138"/>
    <property type="gene ID" value="SDY_3124"/>
</dbReference>
<dbReference type="KEGG" id="sdy:SDY_3124"/>
<dbReference type="PATRIC" id="fig|300267.13.peg.3734"/>
<dbReference type="HOGENOM" id="CLU_057596_1_1_6"/>
<dbReference type="Proteomes" id="UP000002716">
    <property type="component" value="Chromosome"/>
</dbReference>
<dbReference type="GO" id="GO:0005829">
    <property type="term" value="C:cytosol"/>
    <property type="evidence" value="ECO:0007669"/>
    <property type="project" value="TreeGrafter"/>
</dbReference>
<dbReference type="FunFam" id="3.30.70.1300:FF:000001">
    <property type="entry name" value="UPF0301 protein YqgE"/>
    <property type="match status" value="1"/>
</dbReference>
<dbReference type="Gene3D" id="3.40.1740.10">
    <property type="entry name" value="VC0467-like"/>
    <property type="match status" value="1"/>
</dbReference>
<dbReference type="Gene3D" id="3.30.70.1300">
    <property type="entry name" value="VC0467-like domains"/>
    <property type="match status" value="1"/>
</dbReference>
<dbReference type="HAMAP" id="MF_00758">
    <property type="entry name" value="UPF0301"/>
    <property type="match status" value="1"/>
</dbReference>
<dbReference type="InterPro" id="IPR003774">
    <property type="entry name" value="AlgH-like"/>
</dbReference>
<dbReference type="NCBIfam" id="NF001266">
    <property type="entry name" value="PRK00228.1-1"/>
    <property type="match status" value="1"/>
</dbReference>
<dbReference type="PANTHER" id="PTHR30327">
    <property type="entry name" value="UNCHARACTERIZED PROTEIN YQGE"/>
    <property type="match status" value="1"/>
</dbReference>
<dbReference type="PANTHER" id="PTHR30327:SF1">
    <property type="entry name" value="UPF0301 PROTEIN YQGE"/>
    <property type="match status" value="1"/>
</dbReference>
<dbReference type="Pfam" id="PF02622">
    <property type="entry name" value="DUF179"/>
    <property type="match status" value="1"/>
</dbReference>
<dbReference type="SUPFAM" id="SSF143456">
    <property type="entry name" value="VC0467-like"/>
    <property type="match status" value="1"/>
</dbReference>
<name>YQGE_SHIDS</name>
<gene>
    <name evidence="1" type="primary">yqgE</name>
    <name type="ordered locus">SDY_3124</name>
</gene>
<protein>
    <recommendedName>
        <fullName evidence="1">UPF0301 protein YqgE</fullName>
    </recommendedName>
</protein>
<organism>
    <name type="scientific">Shigella dysenteriae serotype 1 (strain Sd197)</name>
    <dbReference type="NCBI Taxonomy" id="300267"/>
    <lineage>
        <taxon>Bacteria</taxon>
        <taxon>Pseudomonadati</taxon>
        <taxon>Pseudomonadota</taxon>
        <taxon>Gammaproteobacteria</taxon>
        <taxon>Enterobacterales</taxon>
        <taxon>Enterobacteriaceae</taxon>
        <taxon>Shigella</taxon>
    </lineage>
</organism>
<keyword id="KW-1185">Reference proteome</keyword>